<name>GLPK_VIBVY</name>
<reference key="1">
    <citation type="journal article" date="2003" name="Genome Res.">
        <title>Comparative genome analysis of Vibrio vulnificus, a marine pathogen.</title>
        <authorList>
            <person name="Chen C.-Y."/>
            <person name="Wu K.-M."/>
            <person name="Chang Y.-C."/>
            <person name="Chang C.-H."/>
            <person name="Tsai H.-C."/>
            <person name="Liao T.-L."/>
            <person name="Liu Y.-M."/>
            <person name="Chen H.-J."/>
            <person name="Shen A.B.-T."/>
            <person name="Li J.-C."/>
            <person name="Su T.-L."/>
            <person name="Shao C.-P."/>
            <person name="Lee C.-T."/>
            <person name="Hor L.-I."/>
            <person name="Tsai S.-F."/>
        </authorList>
    </citation>
    <scope>NUCLEOTIDE SEQUENCE [LARGE SCALE GENOMIC DNA]</scope>
    <source>
        <strain>YJ016</strain>
    </source>
</reference>
<feature type="chain" id="PRO_0000059521" description="Glycerol kinase">
    <location>
        <begin position="1"/>
        <end position="505"/>
    </location>
</feature>
<feature type="binding site" evidence="1">
    <location>
        <position position="14"/>
    </location>
    <ligand>
        <name>ADP</name>
        <dbReference type="ChEBI" id="CHEBI:456216"/>
    </ligand>
</feature>
<feature type="binding site" evidence="1">
    <location>
        <position position="14"/>
    </location>
    <ligand>
        <name>ATP</name>
        <dbReference type="ChEBI" id="CHEBI:30616"/>
    </ligand>
</feature>
<feature type="binding site" evidence="1">
    <location>
        <position position="14"/>
    </location>
    <ligand>
        <name>sn-glycerol 3-phosphate</name>
        <dbReference type="ChEBI" id="CHEBI:57597"/>
    </ligand>
</feature>
<feature type="binding site" evidence="1">
    <location>
        <position position="15"/>
    </location>
    <ligand>
        <name>ATP</name>
        <dbReference type="ChEBI" id="CHEBI:30616"/>
    </ligand>
</feature>
<feature type="binding site" evidence="1">
    <location>
        <position position="16"/>
    </location>
    <ligand>
        <name>ATP</name>
        <dbReference type="ChEBI" id="CHEBI:30616"/>
    </ligand>
</feature>
<feature type="binding site" evidence="1">
    <location>
        <position position="18"/>
    </location>
    <ligand>
        <name>ADP</name>
        <dbReference type="ChEBI" id="CHEBI:456216"/>
    </ligand>
</feature>
<feature type="binding site" evidence="1">
    <location>
        <position position="84"/>
    </location>
    <ligand>
        <name>glycerol</name>
        <dbReference type="ChEBI" id="CHEBI:17754"/>
    </ligand>
</feature>
<feature type="binding site" evidence="1">
    <location>
        <position position="84"/>
    </location>
    <ligand>
        <name>sn-glycerol 3-phosphate</name>
        <dbReference type="ChEBI" id="CHEBI:57597"/>
    </ligand>
</feature>
<feature type="binding site" evidence="1">
    <location>
        <position position="85"/>
    </location>
    <ligand>
        <name>glycerol</name>
        <dbReference type="ChEBI" id="CHEBI:17754"/>
    </ligand>
</feature>
<feature type="binding site" evidence="1">
    <location>
        <position position="85"/>
    </location>
    <ligand>
        <name>sn-glycerol 3-phosphate</name>
        <dbReference type="ChEBI" id="CHEBI:57597"/>
    </ligand>
</feature>
<feature type="binding site" evidence="1">
    <location>
        <position position="136"/>
    </location>
    <ligand>
        <name>glycerol</name>
        <dbReference type="ChEBI" id="CHEBI:17754"/>
    </ligand>
</feature>
<feature type="binding site" evidence="1">
    <location>
        <position position="136"/>
    </location>
    <ligand>
        <name>sn-glycerol 3-phosphate</name>
        <dbReference type="ChEBI" id="CHEBI:57597"/>
    </ligand>
</feature>
<feature type="binding site" evidence="1">
    <location>
        <position position="246"/>
    </location>
    <ligand>
        <name>glycerol</name>
        <dbReference type="ChEBI" id="CHEBI:17754"/>
    </ligand>
</feature>
<feature type="binding site" evidence="1">
    <location>
        <position position="246"/>
    </location>
    <ligand>
        <name>sn-glycerol 3-phosphate</name>
        <dbReference type="ChEBI" id="CHEBI:57597"/>
    </ligand>
</feature>
<feature type="binding site" evidence="1">
    <location>
        <position position="247"/>
    </location>
    <ligand>
        <name>glycerol</name>
        <dbReference type="ChEBI" id="CHEBI:17754"/>
    </ligand>
</feature>
<feature type="binding site" evidence="1">
    <location>
        <position position="268"/>
    </location>
    <ligand>
        <name>ADP</name>
        <dbReference type="ChEBI" id="CHEBI:456216"/>
    </ligand>
</feature>
<feature type="binding site" evidence="1">
    <location>
        <position position="268"/>
    </location>
    <ligand>
        <name>ATP</name>
        <dbReference type="ChEBI" id="CHEBI:30616"/>
    </ligand>
</feature>
<feature type="binding site" evidence="1">
    <location>
        <position position="311"/>
    </location>
    <ligand>
        <name>ADP</name>
        <dbReference type="ChEBI" id="CHEBI:456216"/>
    </ligand>
</feature>
<feature type="binding site" evidence="1">
    <location>
        <position position="311"/>
    </location>
    <ligand>
        <name>ATP</name>
        <dbReference type="ChEBI" id="CHEBI:30616"/>
    </ligand>
</feature>
<feature type="binding site" evidence="1">
    <location>
        <position position="315"/>
    </location>
    <ligand>
        <name>ATP</name>
        <dbReference type="ChEBI" id="CHEBI:30616"/>
    </ligand>
</feature>
<feature type="binding site" evidence="1">
    <location>
        <position position="412"/>
    </location>
    <ligand>
        <name>ADP</name>
        <dbReference type="ChEBI" id="CHEBI:456216"/>
    </ligand>
</feature>
<feature type="binding site" evidence="1">
    <location>
        <position position="412"/>
    </location>
    <ligand>
        <name>ATP</name>
        <dbReference type="ChEBI" id="CHEBI:30616"/>
    </ligand>
</feature>
<feature type="binding site" evidence="1">
    <location>
        <position position="416"/>
    </location>
    <ligand>
        <name>ADP</name>
        <dbReference type="ChEBI" id="CHEBI:456216"/>
    </ligand>
</feature>
<protein>
    <recommendedName>
        <fullName evidence="1">Glycerol kinase</fullName>
        <ecNumber evidence="1">2.7.1.30</ecNumber>
    </recommendedName>
    <alternativeName>
        <fullName evidence="1">ATP:glycerol 3-phosphotransferase</fullName>
    </alternativeName>
    <alternativeName>
        <fullName evidence="1">Glycerokinase</fullName>
        <shortName evidence="1">GK</shortName>
    </alternativeName>
</protein>
<sequence>MTEQKYIVALDQGTTSSRAVVLDHDANIVSVSQREFTQIYPQAGWVEHDPMEIYATQSSTLVEALGKKGIRSDQVAAIGITNQRETTIVWNKETGKPVYNAIVWQCRRTADICEDLKARGLESYIRENTGLVLDPYFSGTKVKWILDNVEGAREDAEAGKLLFGTVDTWLVWKMTQGRVHVTDYTNASRTMLFNINDLCWDSKLLEEMGIPASMMPEVKRSSEIYGQTNIGGKGGTRIPISGIAGDQQAALYGQMCVEAGQAKNTYGTGCFLLMNTGQEKVTSRNGLLTTLACGPKGEPAYALEGAVFMGGASIQWLRDELKLISDAHDSEYFATKVDTSNGVYVVPAFTGLGAPYWDAYARGTIVGLTRGVNSNHIIRATLEGIAYQTRDVLDAMQADSGIKLSALRVDGGAVANNFLMQFQSDVLDTEVHRPKVTEVTALGAAYLAGLAVGYWNSIDELQGKAEIDRSFLPHQDEEKRSRRYKGWKRAVKCAQTWSELRDLED</sequence>
<dbReference type="EC" id="2.7.1.30" evidence="1"/>
<dbReference type="EMBL" id="BA000037">
    <property type="protein sequence ID" value="BAC95388.1"/>
    <property type="molecule type" value="Genomic_DNA"/>
</dbReference>
<dbReference type="RefSeq" id="WP_011079696.1">
    <property type="nucleotide sequence ID" value="NC_005139.1"/>
</dbReference>
<dbReference type="SMR" id="Q7MI93"/>
<dbReference type="STRING" id="672.VV93_v1c23380"/>
<dbReference type="GeneID" id="93896026"/>
<dbReference type="KEGG" id="vvy:VV2624"/>
<dbReference type="eggNOG" id="COG0554">
    <property type="taxonomic scope" value="Bacteria"/>
</dbReference>
<dbReference type="HOGENOM" id="CLU_009281_2_3_6"/>
<dbReference type="UniPathway" id="UPA00618">
    <property type="reaction ID" value="UER00672"/>
</dbReference>
<dbReference type="Proteomes" id="UP000002675">
    <property type="component" value="Chromosome I"/>
</dbReference>
<dbReference type="GO" id="GO:0005829">
    <property type="term" value="C:cytosol"/>
    <property type="evidence" value="ECO:0007669"/>
    <property type="project" value="TreeGrafter"/>
</dbReference>
<dbReference type="GO" id="GO:0005524">
    <property type="term" value="F:ATP binding"/>
    <property type="evidence" value="ECO:0007669"/>
    <property type="project" value="UniProtKB-UniRule"/>
</dbReference>
<dbReference type="GO" id="GO:0004370">
    <property type="term" value="F:glycerol kinase activity"/>
    <property type="evidence" value="ECO:0000250"/>
    <property type="project" value="UniProtKB"/>
</dbReference>
<dbReference type="GO" id="GO:0019563">
    <property type="term" value="P:glycerol catabolic process"/>
    <property type="evidence" value="ECO:0007669"/>
    <property type="project" value="UniProtKB-UniRule"/>
</dbReference>
<dbReference type="GO" id="GO:0006071">
    <property type="term" value="P:glycerol metabolic process"/>
    <property type="evidence" value="ECO:0000250"/>
    <property type="project" value="UniProtKB"/>
</dbReference>
<dbReference type="GO" id="GO:0006072">
    <property type="term" value="P:glycerol-3-phosphate metabolic process"/>
    <property type="evidence" value="ECO:0007669"/>
    <property type="project" value="InterPro"/>
</dbReference>
<dbReference type="CDD" id="cd07786">
    <property type="entry name" value="FGGY_EcGK_like"/>
    <property type="match status" value="1"/>
</dbReference>
<dbReference type="FunFam" id="3.30.420.40:FF:000007">
    <property type="entry name" value="Glycerol kinase"/>
    <property type="match status" value="1"/>
</dbReference>
<dbReference type="FunFam" id="3.30.420.40:FF:000008">
    <property type="entry name" value="Glycerol kinase"/>
    <property type="match status" value="1"/>
</dbReference>
<dbReference type="Gene3D" id="3.30.420.40">
    <property type="match status" value="2"/>
</dbReference>
<dbReference type="HAMAP" id="MF_00186">
    <property type="entry name" value="Glycerol_kin"/>
    <property type="match status" value="1"/>
</dbReference>
<dbReference type="InterPro" id="IPR043129">
    <property type="entry name" value="ATPase_NBD"/>
</dbReference>
<dbReference type="InterPro" id="IPR000577">
    <property type="entry name" value="Carb_kinase_FGGY"/>
</dbReference>
<dbReference type="InterPro" id="IPR018483">
    <property type="entry name" value="Carb_kinase_FGGY_CS"/>
</dbReference>
<dbReference type="InterPro" id="IPR018485">
    <property type="entry name" value="FGGY_C"/>
</dbReference>
<dbReference type="InterPro" id="IPR018484">
    <property type="entry name" value="FGGY_N"/>
</dbReference>
<dbReference type="InterPro" id="IPR005999">
    <property type="entry name" value="Glycerol_kin"/>
</dbReference>
<dbReference type="NCBIfam" id="TIGR01311">
    <property type="entry name" value="glycerol_kin"/>
    <property type="match status" value="1"/>
</dbReference>
<dbReference type="NCBIfam" id="NF000756">
    <property type="entry name" value="PRK00047.1"/>
    <property type="match status" value="1"/>
</dbReference>
<dbReference type="PANTHER" id="PTHR10196:SF69">
    <property type="entry name" value="GLYCEROL KINASE"/>
    <property type="match status" value="1"/>
</dbReference>
<dbReference type="PANTHER" id="PTHR10196">
    <property type="entry name" value="SUGAR KINASE"/>
    <property type="match status" value="1"/>
</dbReference>
<dbReference type="Pfam" id="PF02782">
    <property type="entry name" value="FGGY_C"/>
    <property type="match status" value="1"/>
</dbReference>
<dbReference type="Pfam" id="PF00370">
    <property type="entry name" value="FGGY_N"/>
    <property type="match status" value="1"/>
</dbReference>
<dbReference type="PIRSF" id="PIRSF000538">
    <property type="entry name" value="GlpK"/>
    <property type="match status" value="1"/>
</dbReference>
<dbReference type="SUPFAM" id="SSF53067">
    <property type="entry name" value="Actin-like ATPase domain"/>
    <property type="match status" value="2"/>
</dbReference>
<dbReference type="PROSITE" id="PS00933">
    <property type="entry name" value="FGGY_KINASES_1"/>
    <property type="match status" value="1"/>
</dbReference>
<dbReference type="PROSITE" id="PS00445">
    <property type="entry name" value="FGGY_KINASES_2"/>
    <property type="match status" value="1"/>
</dbReference>
<keyword id="KW-0067">ATP-binding</keyword>
<keyword id="KW-0319">Glycerol metabolism</keyword>
<keyword id="KW-0418">Kinase</keyword>
<keyword id="KW-0547">Nucleotide-binding</keyword>
<keyword id="KW-0808">Transferase</keyword>
<proteinExistence type="inferred from homology"/>
<accession>Q7MI93</accession>
<evidence type="ECO:0000255" key="1">
    <source>
        <dbReference type="HAMAP-Rule" id="MF_00186"/>
    </source>
</evidence>
<comment type="function">
    <text evidence="1">Key enzyme in the regulation of glycerol uptake and metabolism. Catalyzes the phosphorylation of glycerol to yield sn-glycerol 3-phosphate.</text>
</comment>
<comment type="catalytic activity">
    <reaction evidence="1">
        <text>glycerol + ATP = sn-glycerol 3-phosphate + ADP + H(+)</text>
        <dbReference type="Rhea" id="RHEA:21644"/>
        <dbReference type="ChEBI" id="CHEBI:15378"/>
        <dbReference type="ChEBI" id="CHEBI:17754"/>
        <dbReference type="ChEBI" id="CHEBI:30616"/>
        <dbReference type="ChEBI" id="CHEBI:57597"/>
        <dbReference type="ChEBI" id="CHEBI:456216"/>
        <dbReference type="EC" id="2.7.1.30"/>
    </reaction>
</comment>
<comment type="activity regulation">
    <text evidence="1">Inhibited by fructose 1,6-bisphosphate (FBP).</text>
</comment>
<comment type="pathway">
    <text evidence="1">Polyol metabolism; glycerol degradation via glycerol kinase pathway; sn-glycerol 3-phosphate from glycerol: step 1/1.</text>
</comment>
<comment type="similarity">
    <text evidence="1">Belongs to the FGGY kinase family.</text>
</comment>
<organism>
    <name type="scientific">Vibrio vulnificus (strain YJ016)</name>
    <dbReference type="NCBI Taxonomy" id="196600"/>
    <lineage>
        <taxon>Bacteria</taxon>
        <taxon>Pseudomonadati</taxon>
        <taxon>Pseudomonadota</taxon>
        <taxon>Gammaproteobacteria</taxon>
        <taxon>Vibrionales</taxon>
        <taxon>Vibrionaceae</taxon>
        <taxon>Vibrio</taxon>
    </lineage>
</organism>
<gene>
    <name evidence="1" type="primary">glpK</name>
    <name type="ordered locus">VV2624</name>
</gene>